<accession>A9MZG6</accession>
<feature type="chain" id="PRO_0000351571" description="(4S)-4-hydroxy-5-phosphonooxypentane-2,3-dione isomerase">
    <location>
        <begin position="1"/>
        <end position="96"/>
    </location>
</feature>
<feature type="domain" description="ABM" evidence="1">
    <location>
        <begin position="2"/>
        <end position="91"/>
    </location>
</feature>
<reference key="1">
    <citation type="submission" date="2007-11" db="EMBL/GenBank/DDBJ databases">
        <authorList>
            <consortium name="The Salmonella enterica serovar Paratyphi B Genome Sequencing Project"/>
            <person name="McClelland M."/>
            <person name="Sanderson E.K."/>
            <person name="Porwollik S."/>
            <person name="Spieth J."/>
            <person name="Clifton W.S."/>
            <person name="Fulton R."/>
            <person name="Cordes M."/>
            <person name="Wollam A."/>
            <person name="Shah N."/>
            <person name="Pepin K."/>
            <person name="Bhonagiri V."/>
            <person name="Nash W."/>
            <person name="Johnson M."/>
            <person name="Thiruvilangam P."/>
            <person name="Wilson R."/>
        </authorList>
    </citation>
    <scope>NUCLEOTIDE SEQUENCE [LARGE SCALE GENOMIC DNA]</scope>
    <source>
        <strain>ATCC BAA-1250 / SPB7</strain>
    </source>
</reference>
<keyword id="KW-0963">Cytoplasm</keyword>
<keyword id="KW-0413">Isomerase</keyword>
<organism>
    <name type="scientific">Salmonella paratyphi B (strain ATCC BAA-1250 / SPB7)</name>
    <dbReference type="NCBI Taxonomy" id="1016998"/>
    <lineage>
        <taxon>Bacteria</taxon>
        <taxon>Pseudomonadati</taxon>
        <taxon>Pseudomonadota</taxon>
        <taxon>Gammaproteobacteria</taxon>
        <taxon>Enterobacterales</taxon>
        <taxon>Enterobacteriaceae</taxon>
        <taxon>Salmonella</taxon>
    </lineage>
</organism>
<dbReference type="EC" id="5.3.1.32" evidence="1"/>
<dbReference type="EMBL" id="CP000886">
    <property type="protein sequence ID" value="ABX70344.1"/>
    <property type="status" value="ALT_INIT"/>
    <property type="molecule type" value="Genomic_DNA"/>
</dbReference>
<dbReference type="RefSeq" id="WP_001543603.1">
    <property type="nucleotide sequence ID" value="NC_010102.1"/>
</dbReference>
<dbReference type="SMR" id="A9MZG6"/>
<dbReference type="KEGG" id="spq:SPAB_05053"/>
<dbReference type="PATRIC" id="fig|1016998.12.peg.4743"/>
<dbReference type="HOGENOM" id="CLU_131496_3_0_6"/>
<dbReference type="Proteomes" id="UP000008556">
    <property type="component" value="Chromosome"/>
</dbReference>
<dbReference type="GO" id="GO:0005829">
    <property type="term" value="C:cytosol"/>
    <property type="evidence" value="ECO:0007669"/>
    <property type="project" value="TreeGrafter"/>
</dbReference>
<dbReference type="GO" id="GO:0002952">
    <property type="term" value="F:(4S)-4-hydroxy-5-phosphonooxypentane-2,3-dione isomerase activity"/>
    <property type="evidence" value="ECO:0007669"/>
    <property type="project" value="UniProtKB-EC"/>
</dbReference>
<dbReference type="GO" id="GO:0016491">
    <property type="term" value="F:oxidoreductase activity"/>
    <property type="evidence" value="ECO:0007669"/>
    <property type="project" value="TreeGrafter"/>
</dbReference>
<dbReference type="FunFam" id="3.30.70.100:FF:000016">
    <property type="entry name" value="(4S)-4-hydroxy-5-phosphonooxypentane-2,3-dione isomerase"/>
    <property type="match status" value="1"/>
</dbReference>
<dbReference type="Gene3D" id="3.30.70.100">
    <property type="match status" value="1"/>
</dbReference>
<dbReference type="HAMAP" id="MF_02051">
    <property type="entry name" value="LsrG"/>
    <property type="match status" value="1"/>
</dbReference>
<dbReference type="InterPro" id="IPR007138">
    <property type="entry name" value="ABM_dom"/>
</dbReference>
<dbReference type="InterPro" id="IPR050744">
    <property type="entry name" value="AI-2_Isomerase_LsrG"/>
</dbReference>
<dbReference type="InterPro" id="IPR011008">
    <property type="entry name" value="Dimeric_a/b-barrel"/>
</dbReference>
<dbReference type="InterPro" id="IPR033672">
    <property type="entry name" value="LsrG"/>
</dbReference>
<dbReference type="NCBIfam" id="NF007791">
    <property type="entry name" value="PRK10486.1"/>
    <property type="match status" value="1"/>
</dbReference>
<dbReference type="PANTHER" id="PTHR33336:SF1">
    <property type="entry name" value="(4S)-4-HYDROXY-5-PHOSPHONOOXYPENTANE-2,3-DIONE ISOMERASE"/>
    <property type="match status" value="1"/>
</dbReference>
<dbReference type="PANTHER" id="PTHR33336">
    <property type="entry name" value="QUINOL MONOOXYGENASE YGIN-RELATED"/>
    <property type="match status" value="1"/>
</dbReference>
<dbReference type="Pfam" id="PF03992">
    <property type="entry name" value="ABM"/>
    <property type="match status" value="1"/>
</dbReference>
<dbReference type="SUPFAM" id="SSF54909">
    <property type="entry name" value="Dimeric alpha+beta barrel"/>
    <property type="match status" value="1"/>
</dbReference>
<dbReference type="PROSITE" id="PS51725">
    <property type="entry name" value="ABM"/>
    <property type="match status" value="1"/>
</dbReference>
<protein>
    <recommendedName>
        <fullName evidence="1">(4S)-4-hydroxy-5-phosphonooxypentane-2,3-dione isomerase</fullName>
        <ecNumber evidence="1">5.3.1.32</ecNumber>
    </recommendedName>
    <alternativeName>
        <fullName evidence="1">Autoinducer 2-degrading protein LsrG</fullName>
        <shortName evidence="1">AI-2-degrading protein LsrG</shortName>
    </alternativeName>
    <alternativeName>
        <fullName evidence="1">Phospho-(S)-4,5-dihydroxy-2,3-pentanedione isomerase</fullName>
    </alternativeName>
    <alternativeName>
        <fullName evidence="1">Phospho-AI-2 isomerase</fullName>
    </alternativeName>
</protein>
<gene>
    <name evidence="1" type="primary">lsrG</name>
    <name type="ordered locus">SPAB_05053</name>
</gene>
<comment type="function">
    <text evidence="1">Involved in the degradation of phospho-AI-2, thereby terminating induction of the lsr operon and closing the AI-2 signaling cycle. Catalyzes the conversion of (4S)-4-hydroxy-5-phosphonooxypentane-2,3-dione (P-DPD) to 3-hydroxy-5-phosphonooxypentane-2,4-dione (P-HPD).</text>
</comment>
<comment type="catalytic activity">
    <reaction evidence="1">
        <text>(2S)-2-hydroxy-3,4-dioxopentyl phosphate = 3-hydroxy-2,4-dioxopentyl phosphate</text>
        <dbReference type="Rhea" id="RHEA:44360"/>
        <dbReference type="ChEBI" id="CHEBI:71677"/>
        <dbReference type="ChEBI" id="CHEBI:84359"/>
        <dbReference type="EC" id="5.3.1.32"/>
    </reaction>
</comment>
<comment type="subunit">
    <text evidence="1">Homodimer.</text>
</comment>
<comment type="subcellular location">
    <subcellularLocation>
        <location evidence="1">Cytoplasm</location>
    </subcellularLocation>
</comment>
<comment type="similarity">
    <text evidence="1">Belongs to the LsrG family.</text>
</comment>
<comment type="sequence caution" evidence="2">
    <conflict type="erroneous initiation">
        <sequence resource="EMBL-CDS" id="ABX70344"/>
    </conflict>
    <text>Extended N-terminus.</text>
</comment>
<evidence type="ECO:0000255" key="1">
    <source>
        <dbReference type="HAMAP-Rule" id="MF_02051"/>
    </source>
</evidence>
<evidence type="ECO:0000305" key="2"/>
<name>LSRG_SALPB</name>
<proteinExistence type="inferred from homology"/>
<sequence>MHVTLVEINVHDDKVEQFIDVFRQNHLGSIKEPGNLRFDVLQDPQVPTRFYIYEAYVDEQAVAFHKTTPHYKTCVEQLEPLMTGPRTKKVFMGLMP</sequence>